<sequence length="584" mass="68960">MNLKEQVDLLTNKPGCYLFLNKDNEVIYVGKAKNLKKRVSTYFNKAYNIKTTRLIREITHLKYFIVDNEKESLLLEKNLIKKYRPKYNVLLNDDKTYPYIIITNQKDPMYKYVRKYEKKALRNYGPLPIGSNARSILLTLQRLFPLRMCKGDLKKPCLYYHLNQCSGACFKTVDSSYYEYQIKQVDKFFKGEINQVKQTLVKQMQKASDNLQFEQAKRIKDQITSLDFITAKQNVDIVTNKNIDVVNYEINEEKICFVMLFYRLGQLTYKDEYIQNYEGQDLDELLNSYLQQIYQKNLYPDVLLIPNEIDLLDLDENLLEFSSYSFNNQDDIFIKLAKQNAVDSLNKSILSNNVNSGDELEILDQLQQISNINKYPKRIEIFDISNIYNQFITGACIVYINAKPVRNEFRKYNIDSQYTSDYARMKFMLEKRFLKRIKEKEQLPDLIIVDGGIIQIHAAKEVLNKLNLKINVIGLSKDNNHKTRYLIDIFEQTIDIKNFKKLYNFLTSLQIRVDEYAKSGFRKKYHNQLNDQILLIKGVGKKTNLKLYKHFKTIDNIKNASFDELNKIINNKKITNLIISNFKK</sequence>
<accession>Q2SSM4</accession>
<dbReference type="EMBL" id="CP000123">
    <property type="protein sequence ID" value="ABC01582.1"/>
    <property type="molecule type" value="Genomic_DNA"/>
</dbReference>
<dbReference type="RefSeq" id="WP_011387140.1">
    <property type="nucleotide sequence ID" value="NC_007633.1"/>
</dbReference>
<dbReference type="SMR" id="Q2SSM4"/>
<dbReference type="GeneID" id="23778794"/>
<dbReference type="KEGG" id="mcp:MCAP_0252"/>
<dbReference type="HOGENOM" id="CLU_014841_3_2_14"/>
<dbReference type="PhylomeDB" id="Q2SSM4"/>
<dbReference type="Proteomes" id="UP000001928">
    <property type="component" value="Chromosome"/>
</dbReference>
<dbReference type="GO" id="GO:0005737">
    <property type="term" value="C:cytoplasm"/>
    <property type="evidence" value="ECO:0007669"/>
    <property type="project" value="UniProtKB-SubCell"/>
</dbReference>
<dbReference type="GO" id="GO:0009380">
    <property type="term" value="C:excinuclease repair complex"/>
    <property type="evidence" value="ECO:0007669"/>
    <property type="project" value="InterPro"/>
</dbReference>
<dbReference type="GO" id="GO:0003677">
    <property type="term" value="F:DNA binding"/>
    <property type="evidence" value="ECO:0007669"/>
    <property type="project" value="UniProtKB-UniRule"/>
</dbReference>
<dbReference type="GO" id="GO:0009381">
    <property type="term" value="F:excinuclease ABC activity"/>
    <property type="evidence" value="ECO:0007669"/>
    <property type="project" value="UniProtKB-UniRule"/>
</dbReference>
<dbReference type="GO" id="GO:0006289">
    <property type="term" value="P:nucleotide-excision repair"/>
    <property type="evidence" value="ECO:0007669"/>
    <property type="project" value="UniProtKB-UniRule"/>
</dbReference>
<dbReference type="GO" id="GO:0009432">
    <property type="term" value="P:SOS response"/>
    <property type="evidence" value="ECO:0007669"/>
    <property type="project" value="UniProtKB-UniRule"/>
</dbReference>
<dbReference type="CDD" id="cd10434">
    <property type="entry name" value="GIY-YIG_UvrC_Cho"/>
    <property type="match status" value="1"/>
</dbReference>
<dbReference type="FunFam" id="3.40.1440.10:FF:000001">
    <property type="entry name" value="UvrABC system protein C"/>
    <property type="match status" value="1"/>
</dbReference>
<dbReference type="Gene3D" id="1.10.150.20">
    <property type="entry name" value="5' to 3' exonuclease, C-terminal subdomain"/>
    <property type="match status" value="1"/>
</dbReference>
<dbReference type="Gene3D" id="3.40.1440.10">
    <property type="entry name" value="GIY-YIG endonuclease"/>
    <property type="match status" value="1"/>
</dbReference>
<dbReference type="Gene3D" id="4.10.860.10">
    <property type="entry name" value="UVR domain"/>
    <property type="match status" value="1"/>
</dbReference>
<dbReference type="Gene3D" id="3.30.420.340">
    <property type="entry name" value="UvrC, RNAse H endonuclease domain"/>
    <property type="match status" value="1"/>
</dbReference>
<dbReference type="HAMAP" id="MF_00203">
    <property type="entry name" value="UvrC"/>
    <property type="match status" value="1"/>
</dbReference>
<dbReference type="InterPro" id="IPR000305">
    <property type="entry name" value="GIY-YIG_endonuc"/>
</dbReference>
<dbReference type="InterPro" id="IPR035901">
    <property type="entry name" value="GIY-YIG_endonuc_sf"/>
</dbReference>
<dbReference type="InterPro" id="IPR047296">
    <property type="entry name" value="GIY-YIG_UvrC_Cho"/>
</dbReference>
<dbReference type="InterPro" id="IPR010994">
    <property type="entry name" value="RuvA_2-like"/>
</dbReference>
<dbReference type="InterPro" id="IPR001943">
    <property type="entry name" value="UVR_dom"/>
</dbReference>
<dbReference type="InterPro" id="IPR036876">
    <property type="entry name" value="UVR_dom_sf"/>
</dbReference>
<dbReference type="InterPro" id="IPR050066">
    <property type="entry name" value="UvrABC_protein_C"/>
</dbReference>
<dbReference type="InterPro" id="IPR004791">
    <property type="entry name" value="UvrC"/>
</dbReference>
<dbReference type="InterPro" id="IPR001162">
    <property type="entry name" value="UvrC_RNase_H_dom"/>
</dbReference>
<dbReference type="InterPro" id="IPR038476">
    <property type="entry name" value="UvrC_RNase_H_dom_sf"/>
</dbReference>
<dbReference type="NCBIfam" id="TIGR00194">
    <property type="entry name" value="uvrC"/>
    <property type="match status" value="1"/>
</dbReference>
<dbReference type="PANTHER" id="PTHR30562:SF1">
    <property type="entry name" value="UVRABC SYSTEM PROTEIN C"/>
    <property type="match status" value="1"/>
</dbReference>
<dbReference type="PANTHER" id="PTHR30562">
    <property type="entry name" value="UVRC/OXIDOREDUCTASE"/>
    <property type="match status" value="1"/>
</dbReference>
<dbReference type="Pfam" id="PF01541">
    <property type="entry name" value="GIY-YIG"/>
    <property type="match status" value="1"/>
</dbReference>
<dbReference type="Pfam" id="PF02151">
    <property type="entry name" value="UVR"/>
    <property type="match status" value="1"/>
</dbReference>
<dbReference type="Pfam" id="PF22920">
    <property type="entry name" value="UvrC_RNaseH"/>
    <property type="match status" value="1"/>
</dbReference>
<dbReference type="Pfam" id="PF08459">
    <property type="entry name" value="UvrC_RNaseH_dom"/>
    <property type="match status" value="1"/>
</dbReference>
<dbReference type="SMART" id="SM00465">
    <property type="entry name" value="GIYc"/>
    <property type="match status" value="1"/>
</dbReference>
<dbReference type="SUPFAM" id="SSF46600">
    <property type="entry name" value="C-terminal UvrC-binding domain of UvrB"/>
    <property type="match status" value="1"/>
</dbReference>
<dbReference type="SUPFAM" id="SSF82771">
    <property type="entry name" value="GIY-YIG endonuclease"/>
    <property type="match status" value="1"/>
</dbReference>
<dbReference type="SUPFAM" id="SSF47781">
    <property type="entry name" value="RuvA domain 2-like"/>
    <property type="match status" value="1"/>
</dbReference>
<dbReference type="PROSITE" id="PS50164">
    <property type="entry name" value="GIY_YIG"/>
    <property type="match status" value="1"/>
</dbReference>
<dbReference type="PROSITE" id="PS50151">
    <property type="entry name" value="UVR"/>
    <property type="match status" value="1"/>
</dbReference>
<dbReference type="PROSITE" id="PS50165">
    <property type="entry name" value="UVRC"/>
    <property type="match status" value="1"/>
</dbReference>
<evidence type="ECO:0000255" key="1">
    <source>
        <dbReference type="HAMAP-Rule" id="MF_00203"/>
    </source>
</evidence>
<keyword id="KW-0963">Cytoplasm</keyword>
<keyword id="KW-0227">DNA damage</keyword>
<keyword id="KW-0228">DNA excision</keyword>
<keyword id="KW-0234">DNA repair</keyword>
<keyword id="KW-0267">Excision nuclease</keyword>
<keyword id="KW-0742">SOS response</keyword>
<reference key="1">
    <citation type="submission" date="2005-09" db="EMBL/GenBank/DDBJ databases">
        <authorList>
            <person name="Glass J.I."/>
            <person name="Lartigue C."/>
            <person name="Pfannkoch C."/>
            <person name="Baden-Tillson H."/>
            <person name="Smith H.O."/>
            <person name="Venter J.C."/>
            <person name="Roske K."/>
            <person name="Wise K.S."/>
            <person name="Calcutt M.J."/>
            <person name="Nelson W.C."/>
            <person name="Nierman W.C."/>
        </authorList>
    </citation>
    <scope>NUCLEOTIDE SEQUENCE [LARGE SCALE GENOMIC DNA]</scope>
    <source>
        <strain>California kid / ATCC 27343 / NCTC 10154</strain>
    </source>
</reference>
<gene>
    <name evidence="1" type="primary">uvrC</name>
    <name type="ordered locus">MCAP_0252</name>
</gene>
<feature type="chain" id="PRO_0000264914" description="UvrABC system protein C">
    <location>
        <begin position="1"/>
        <end position="584"/>
    </location>
</feature>
<feature type="domain" description="GIY-YIG" evidence="1">
    <location>
        <begin position="12"/>
        <end position="89"/>
    </location>
</feature>
<feature type="domain" description="UVR" evidence="1">
    <location>
        <begin position="194"/>
        <end position="229"/>
    </location>
</feature>
<proteinExistence type="inferred from homology"/>
<protein>
    <recommendedName>
        <fullName evidence="1">UvrABC system protein C</fullName>
        <shortName evidence="1">Protein UvrC</shortName>
    </recommendedName>
    <alternativeName>
        <fullName evidence="1">Excinuclease ABC subunit C</fullName>
    </alternativeName>
</protein>
<comment type="function">
    <text evidence="1">The UvrABC repair system catalyzes the recognition and processing of DNA lesions. UvrC both incises the 5' and 3' sides of the lesion. The N-terminal half is responsible for the 3' incision and the C-terminal half is responsible for the 5' incision.</text>
</comment>
<comment type="subunit">
    <text evidence="1">Interacts with UvrB in an incision complex.</text>
</comment>
<comment type="subcellular location">
    <subcellularLocation>
        <location evidence="1">Cytoplasm</location>
    </subcellularLocation>
</comment>
<comment type="similarity">
    <text evidence="1">Belongs to the UvrC family.</text>
</comment>
<organism>
    <name type="scientific">Mycoplasma capricolum subsp. capricolum (strain California kid / ATCC 27343 / NCTC 10154)</name>
    <dbReference type="NCBI Taxonomy" id="340047"/>
    <lineage>
        <taxon>Bacteria</taxon>
        <taxon>Bacillati</taxon>
        <taxon>Mycoplasmatota</taxon>
        <taxon>Mollicutes</taxon>
        <taxon>Mycoplasmataceae</taxon>
        <taxon>Mycoplasma</taxon>
    </lineage>
</organism>
<name>UVRC_MYCCT</name>